<gene>
    <name evidence="1" type="primary">rps19</name>
</gene>
<feature type="chain" id="PRO_0000354350" description="Small ribosomal subunit protein uS19c">
    <location>
        <begin position="1"/>
        <end position="92"/>
    </location>
</feature>
<keyword id="KW-0150">Chloroplast</keyword>
<keyword id="KW-0934">Plastid</keyword>
<keyword id="KW-0687">Ribonucleoprotein</keyword>
<keyword id="KW-0689">Ribosomal protein</keyword>
<keyword id="KW-0694">RNA-binding</keyword>
<keyword id="KW-0699">rRNA-binding</keyword>
<comment type="function">
    <text evidence="1">Protein S19 forms a complex with S13 that binds strongly to the 16S ribosomal RNA.</text>
</comment>
<comment type="subcellular location">
    <subcellularLocation>
        <location>Plastid</location>
        <location>Chloroplast</location>
    </subcellularLocation>
</comment>
<comment type="similarity">
    <text evidence="1">Belongs to the universal ribosomal protein uS19 family.</text>
</comment>
<evidence type="ECO:0000255" key="1">
    <source>
        <dbReference type="HAMAP-Rule" id="MF_00531"/>
    </source>
</evidence>
<evidence type="ECO:0000305" key="2"/>
<dbReference type="EMBL" id="AP009339">
    <property type="protein sequence ID" value="BAF64988.1"/>
    <property type="molecule type" value="Genomic_DNA"/>
</dbReference>
<dbReference type="RefSeq" id="YP_001312247.1">
    <property type="nucleotide sequence ID" value="NC_009618.1"/>
</dbReference>
<dbReference type="SMR" id="A6H5M2"/>
<dbReference type="GeneID" id="5309511"/>
<dbReference type="GO" id="GO:0009507">
    <property type="term" value="C:chloroplast"/>
    <property type="evidence" value="ECO:0007669"/>
    <property type="project" value="UniProtKB-SubCell"/>
</dbReference>
<dbReference type="GO" id="GO:0005763">
    <property type="term" value="C:mitochondrial small ribosomal subunit"/>
    <property type="evidence" value="ECO:0007669"/>
    <property type="project" value="TreeGrafter"/>
</dbReference>
<dbReference type="GO" id="GO:0019843">
    <property type="term" value="F:rRNA binding"/>
    <property type="evidence" value="ECO:0007669"/>
    <property type="project" value="UniProtKB-UniRule"/>
</dbReference>
<dbReference type="GO" id="GO:0003735">
    <property type="term" value="F:structural constituent of ribosome"/>
    <property type="evidence" value="ECO:0007669"/>
    <property type="project" value="InterPro"/>
</dbReference>
<dbReference type="GO" id="GO:0000028">
    <property type="term" value="P:ribosomal small subunit assembly"/>
    <property type="evidence" value="ECO:0007669"/>
    <property type="project" value="TreeGrafter"/>
</dbReference>
<dbReference type="GO" id="GO:0006412">
    <property type="term" value="P:translation"/>
    <property type="evidence" value="ECO:0007669"/>
    <property type="project" value="UniProtKB-UniRule"/>
</dbReference>
<dbReference type="FunFam" id="3.30.860.10:FF:000001">
    <property type="entry name" value="30S ribosomal protein S19"/>
    <property type="match status" value="1"/>
</dbReference>
<dbReference type="Gene3D" id="3.30.860.10">
    <property type="entry name" value="30s Ribosomal Protein S19, Chain A"/>
    <property type="match status" value="1"/>
</dbReference>
<dbReference type="HAMAP" id="MF_00531">
    <property type="entry name" value="Ribosomal_uS19"/>
    <property type="match status" value="1"/>
</dbReference>
<dbReference type="InterPro" id="IPR002222">
    <property type="entry name" value="Ribosomal_uS19"/>
</dbReference>
<dbReference type="InterPro" id="IPR005732">
    <property type="entry name" value="Ribosomal_uS19_bac-type"/>
</dbReference>
<dbReference type="InterPro" id="IPR020934">
    <property type="entry name" value="Ribosomal_uS19_CS"/>
</dbReference>
<dbReference type="InterPro" id="IPR023575">
    <property type="entry name" value="Ribosomal_uS19_SF"/>
</dbReference>
<dbReference type="NCBIfam" id="TIGR01050">
    <property type="entry name" value="rpsS_bact"/>
    <property type="match status" value="1"/>
</dbReference>
<dbReference type="PANTHER" id="PTHR11880">
    <property type="entry name" value="RIBOSOMAL PROTEIN S19P FAMILY MEMBER"/>
    <property type="match status" value="1"/>
</dbReference>
<dbReference type="PANTHER" id="PTHR11880:SF8">
    <property type="entry name" value="SMALL RIBOSOMAL SUBUNIT PROTEIN US19M"/>
    <property type="match status" value="1"/>
</dbReference>
<dbReference type="Pfam" id="PF00203">
    <property type="entry name" value="Ribosomal_S19"/>
    <property type="match status" value="1"/>
</dbReference>
<dbReference type="PIRSF" id="PIRSF002144">
    <property type="entry name" value="Ribosomal_S19"/>
    <property type="match status" value="1"/>
</dbReference>
<dbReference type="PRINTS" id="PR00975">
    <property type="entry name" value="RIBOSOMALS19"/>
</dbReference>
<dbReference type="SUPFAM" id="SSF54570">
    <property type="entry name" value="Ribosomal protein S19"/>
    <property type="match status" value="1"/>
</dbReference>
<dbReference type="PROSITE" id="PS00323">
    <property type="entry name" value="RIBOSOMAL_S19"/>
    <property type="match status" value="1"/>
</dbReference>
<reference key="1">
    <citation type="journal article" date="2007" name="Mol. Biol. Evol.">
        <title>Chloroplast genome (cpDNA) of Cycas taitungensis and 56 cp protein-coding genes of Gnetum parvifolium: insights into cpDNA evolution and phylogeny of extant seed plants.</title>
        <authorList>
            <person name="Wu C.-S."/>
            <person name="Wang Y.-N."/>
            <person name="Liu S.-M."/>
            <person name="Chaw S.-M."/>
        </authorList>
    </citation>
    <scope>NUCLEOTIDE SEQUENCE [LARGE SCALE GENOMIC DNA]</scope>
</reference>
<organism>
    <name type="scientific">Cycas taitungensis</name>
    <name type="common">Prince sago</name>
    <name type="synonym">Cycas taiwaniana</name>
    <dbReference type="NCBI Taxonomy" id="54799"/>
    <lineage>
        <taxon>Eukaryota</taxon>
        <taxon>Viridiplantae</taxon>
        <taxon>Streptophyta</taxon>
        <taxon>Embryophyta</taxon>
        <taxon>Tracheophyta</taxon>
        <taxon>Spermatophyta</taxon>
        <taxon>Cycadidae</taxon>
        <taxon>Cycadales</taxon>
        <taxon>Cycadaceae</taxon>
        <taxon>Cycas</taxon>
    </lineage>
</organism>
<proteinExistence type="inferred from homology"/>
<accession>A6H5M2</accession>
<protein>
    <recommendedName>
        <fullName evidence="1">Small ribosomal subunit protein uS19c</fullName>
    </recommendedName>
    <alternativeName>
        <fullName evidence="2">30S ribosomal protein S19, chloroplastic</fullName>
    </alternativeName>
</protein>
<name>RR19_CYCTA</name>
<sequence length="92" mass="10443">MARSLKKNPFVANHSLRKIENLNIKKEKKIIVTWSRASTIVPAMIGHTIAVHNGKEHLPIYITDRMVGHKLGEFAPTLIPRGHAKSDNRSRR</sequence>
<geneLocation type="chloroplast"/>